<accession>Q2PE76</accession>
<evidence type="ECO:0000250" key="1"/>
<evidence type="ECO:0000250" key="2">
    <source>
        <dbReference type="UniProtKB" id="P29460"/>
    </source>
</evidence>
<evidence type="ECO:0000250" key="3">
    <source>
        <dbReference type="UniProtKB" id="P43432"/>
    </source>
</evidence>
<evidence type="ECO:0000255" key="4"/>
<evidence type="ECO:0000255" key="5">
    <source>
        <dbReference type="PROSITE-ProRule" id="PRU00114"/>
    </source>
</evidence>
<evidence type="ECO:0000255" key="6">
    <source>
        <dbReference type="PROSITE-ProRule" id="PRU00316"/>
    </source>
</evidence>
<evidence type="ECO:0000305" key="7"/>
<reference key="1">
    <citation type="journal article" date="2006" name="Vet. Immunol. Immunopathol.">
        <title>Comparative assessment of Th1 and Th2 cytokines of swamp type buffalo and other bubaline breeds by molecular cloning, sequencing and phylogenetics.</title>
        <authorList>
            <person name="Mingala C.N."/>
            <person name="Odbileg R."/>
            <person name="Konnai S."/>
            <person name="Ohashi K."/>
            <person name="Onuma M."/>
        </authorList>
    </citation>
    <scope>NUCLEOTIDE SEQUENCE [MRNA]</scope>
</reference>
<feature type="signal peptide" evidence="1">
    <location>
        <begin position="1"/>
        <end position="22"/>
    </location>
</feature>
<feature type="chain" id="PRO_0000254897" description="Interleukin-12 subunit beta">
    <location>
        <begin position="23"/>
        <end position="327"/>
    </location>
</feature>
<feature type="domain" description="Ig-like C2-type">
    <location>
        <begin position="23"/>
        <end position="106"/>
    </location>
</feature>
<feature type="domain" description="Fibronectin type-III" evidence="6">
    <location>
        <begin position="238"/>
        <end position="327"/>
    </location>
</feature>
<feature type="glycosylation site" description="N-linked (GlcNAc...) asparagine" evidence="4">
    <location>
        <position position="223"/>
    </location>
</feature>
<feature type="disulfide bond" evidence="5">
    <location>
        <begin position="50"/>
        <end position="90"/>
    </location>
</feature>
<feature type="disulfide bond" description="Interchain (with C-98 in IL12A)" evidence="5">
    <location>
        <position position="200"/>
    </location>
</feature>
<name>IL12B_BUBCA</name>
<keyword id="KW-0202">Cytokine</keyword>
<keyword id="KW-1015">Disulfide bond</keyword>
<keyword id="KW-0325">Glycoprotein</keyword>
<keyword id="KW-0393">Immunoglobulin domain</keyword>
<keyword id="KW-0964">Secreted</keyword>
<keyword id="KW-0732">Signal</keyword>
<gene>
    <name type="primary">IL12B</name>
</gene>
<proteinExistence type="evidence at transcript level"/>
<organism>
    <name type="scientific">Bubalus carabanensis</name>
    <name type="common">Swamp type water buffalo</name>
    <name type="synonym">Bubalus bubalis carabanensis</name>
    <dbReference type="NCBI Taxonomy" id="3119969"/>
    <lineage>
        <taxon>Eukaryota</taxon>
        <taxon>Metazoa</taxon>
        <taxon>Chordata</taxon>
        <taxon>Craniata</taxon>
        <taxon>Vertebrata</taxon>
        <taxon>Euteleostomi</taxon>
        <taxon>Mammalia</taxon>
        <taxon>Eutheria</taxon>
        <taxon>Laurasiatheria</taxon>
        <taxon>Artiodactyla</taxon>
        <taxon>Ruminantia</taxon>
        <taxon>Pecora</taxon>
        <taxon>Bovidae</taxon>
        <taxon>Bovinae</taxon>
        <taxon>Bubalus</taxon>
    </lineage>
</organism>
<protein>
    <recommendedName>
        <fullName>Interleukin-12 subunit beta</fullName>
        <shortName>IL-12B</shortName>
    </recommendedName>
    <alternativeName>
        <fullName>Cytotoxic lymphocyte maturation factor 40 kDa subunit</fullName>
        <shortName>CLMF p40</shortName>
    </alternativeName>
    <alternativeName>
        <fullName>IL-12 subunit p40</fullName>
    </alternativeName>
</protein>
<sequence>MHPQQLVVSWFSLVLLASPIVAIWELEKNVYIVELDWYPDAPGETVVLTCDTPEEDGITWTSDQSSEVLGSGKTLTIQVKEFGDAGQYTCHKGGEALSRSLLLLHKKEDGIWSTDILKDQKEPKAKSFLKCEAKDYSGHFTCWWLTAISTDLKFSVKSSRGSSDPRGVTCGAASLSAEKVSVDHREYNKYTVECQEGSTCPAAEESLLIEVVVEAVHKLKYENYTSSFFIRDIIKPDPPKNLQLRPLKNSRQVEVSWEYPDTWSTPHSYFSLTFCVQVQGKNKREKKLFMDQTSAKVTCHKDANVRVQARDRYYSSFWSEWASVSCS</sequence>
<dbReference type="EMBL" id="AB246273">
    <property type="protein sequence ID" value="BAE75850.1"/>
    <property type="molecule type" value="mRNA"/>
</dbReference>
<dbReference type="SMR" id="Q2PE76"/>
<dbReference type="GlyCosmos" id="Q2PE76">
    <property type="glycosylation" value="1 site, No reported glycans"/>
</dbReference>
<dbReference type="GO" id="GO:0005615">
    <property type="term" value="C:extracellular space"/>
    <property type="evidence" value="ECO:0007669"/>
    <property type="project" value="UniProtKB-KW"/>
</dbReference>
<dbReference type="GO" id="GO:0016020">
    <property type="term" value="C:membrane"/>
    <property type="evidence" value="ECO:0007669"/>
    <property type="project" value="InterPro"/>
</dbReference>
<dbReference type="GO" id="GO:0005125">
    <property type="term" value="F:cytokine activity"/>
    <property type="evidence" value="ECO:0007669"/>
    <property type="project" value="UniProtKB-KW"/>
</dbReference>
<dbReference type="GO" id="GO:0004896">
    <property type="term" value="F:cytokine receptor activity"/>
    <property type="evidence" value="ECO:0007669"/>
    <property type="project" value="InterPro"/>
</dbReference>
<dbReference type="CDD" id="cd00063">
    <property type="entry name" value="FN3"/>
    <property type="match status" value="1"/>
</dbReference>
<dbReference type="FunFam" id="2.60.40.10:FF:000959">
    <property type="entry name" value="Interleukin-12 subunit beta"/>
    <property type="match status" value="1"/>
</dbReference>
<dbReference type="FunFam" id="2.60.40.10:FF:001008">
    <property type="entry name" value="Interleukin-12 subunit beta"/>
    <property type="match status" value="1"/>
</dbReference>
<dbReference type="FunFam" id="2.60.40.10:FF:001009">
    <property type="entry name" value="Interleukin-12 subunit beta"/>
    <property type="match status" value="1"/>
</dbReference>
<dbReference type="Gene3D" id="2.60.40.10">
    <property type="entry name" value="Immunoglobulins"/>
    <property type="match status" value="3"/>
</dbReference>
<dbReference type="InterPro" id="IPR003961">
    <property type="entry name" value="FN3_dom"/>
</dbReference>
<dbReference type="InterPro" id="IPR036116">
    <property type="entry name" value="FN3_sf"/>
</dbReference>
<dbReference type="InterPro" id="IPR003530">
    <property type="entry name" value="Hematopoietin_rcpt_L_F3_CS"/>
</dbReference>
<dbReference type="InterPro" id="IPR007110">
    <property type="entry name" value="Ig-like_dom"/>
</dbReference>
<dbReference type="InterPro" id="IPR036179">
    <property type="entry name" value="Ig-like_dom_sf"/>
</dbReference>
<dbReference type="InterPro" id="IPR013783">
    <property type="entry name" value="Ig-like_fold"/>
</dbReference>
<dbReference type="InterPro" id="IPR003598">
    <property type="entry name" value="Ig_sub2"/>
</dbReference>
<dbReference type="InterPro" id="IPR050676">
    <property type="entry name" value="IL-12"/>
</dbReference>
<dbReference type="InterPro" id="IPR015528">
    <property type="entry name" value="IL-12_beta"/>
</dbReference>
<dbReference type="InterPro" id="IPR019482">
    <property type="entry name" value="IL-12_beta_cen-dom"/>
</dbReference>
<dbReference type="PANTHER" id="PTHR48485:SF4">
    <property type="entry name" value="INTERLEUKIN-12 SUBUNIT BETA"/>
    <property type="match status" value="1"/>
</dbReference>
<dbReference type="PANTHER" id="PTHR48485">
    <property type="entry name" value="INTERLEUKIN-12 SUBUNIT BETA-RELATED"/>
    <property type="match status" value="1"/>
</dbReference>
<dbReference type="Pfam" id="PF10420">
    <property type="entry name" value="IL12p40_C"/>
    <property type="match status" value="1"/>
</dbReference>
<dbReference type="PIRSF" id="PIRSF038007">
    <property type="entry name" value="IL_12_beta"/>
    <property type="match status" value="1"/>
</dbReference>
<dbReference type="PRINTS" id="PR01928">
    <property type="entry name" value="INTRLEUKN12B"/>
</dbReference>
<dbReference type="SMART" id="SM00408">
    <property type="entry name" value="IGc2"/>
    <property type="match status" value="1"/>
</dbReference>
<dbReference type="SUPFAM" id="SSF49265">
    <property type="entry name" value="Fibronectin type III"/>
    <property type="match status" value="2"/>
</dbReference>
<dbReference type="SUPFAM" id="SSF48726">
    <property type="entry name" value="Immunoglobulin"/>
    <property type="match status" value="1"/>
</dbReference>
<dbReference type="PROSITE" id="PS50853">
    <property type="entry name" value="FN3"/>
    <property type="match status" value="1"/>
</dbReference>
<dbReference type="PROSITE" id="PS01354">
    <property type="entry name" value="HEMATOPO_REC_L_F3"/>
    <property type="match status" value="1"/>
</dbReference>
<dbReference type="PROSITE" id="PS50835">
    <property type="entry name" value="IG_LIKE"/>
    <property type="match status" value="1"/>
</dbReference>
<comment type="function">
    <text evidence="1">Cytokine that can act as a growth factor for activated T and NK cells, enhance the lytic activity of NK/lymphokine-activated killer cells, and stimulate the production of IFN-gamma by resting PBMC.</text>
</comment>
<comment type="subunit">
    <text evidence="2 3">Heterodimer with IL12A; disulfide-linked. The heterodimer is known as interleukin IL-12. Heterodimer with IL23A; disulfide-linked. The heterodimer is known as interleukin IL-23. Also secreted as a monomer. Interacts with NBR1; this interaction promotes IL-12 secretion (By similarity).</text>
</comment>
<comment type="subcellular location">
    <subcellularLocation>
        <location evidence="1">Secreted</location>
    </subcellularLocation>
</comment>
<comment type="similarity">
    <text evidence="7">Belongs to the IL-12B family.</text>
</comment>